<keyword id="KW-0233">DNA recombination</keyword>
<keyword id="KW-0238">DNA-binding</keyword>
<keyword id="KW-0804">Transcription</keyword>
<keyword id="KW-0805">Transcription regulation</keyword>
<keyword id="KW-0810">Translation regulation</keyword>
<gene>
    <name evidence="1" type="primary">ihfB</name>
    <name evidence="1" type="synonym">himD</name>
    <name type="ordered locus">SPAB_02534</name>
</gene>
<sequence>MTKSELIERLATQQSHIPAKAVEDAVKEMLEHMASTLAQGERIEIRGFGSFSLHYRAPRTGRNPKTGDKVELEGKYVPHFKPGKELRDRANIYG</sequence>
<proteinExistence type="inferred from homology"/>
<dbReference type="EMBL" id="CP000886">
    <property type="protein sequence ID" value="ABX67914.1"/>
    <property type="molecule type" value="Genomic_DNA"/>
</dbReference>
<dbReference type="RefSeq" id="WP_000167332.1">
    <property type="nucleotide sequence ID" value="NC_010102.1"/>
</dbReference>
<dbReference type="SMR" id="A9N7V2"/>
<dbReference type="GeneID" id="84237116"/>
<dbReference type="KEGG" id="spq:SPAB_02534"/>
<dbReference type="PATRIC" id="fig|1016998.12.peg.2400"/>
<dbReference type="HOGENOM" id="CLU_105066_2_0_6"/>
<dbReference type="BioCyc" id="SENT1016998:SPAB_RS10295-MONOMER"/>
<dbReference type="Proteomes" id="UP000008556">
    <property type="component" value="Chromosome"/>
</dbReference>
<dbReference type="GO" id="GO:0005694">
    <property type="term" value="C:chromosome"/>
    <property type="evidence" value="ECO:0007669"/>
    <property type="project" value="InterPro"/>
</dbReference>
<dbReference type="GO" id="GO:0005829">
    <property type="term" value="C:cytosol"/>
    <property type="evidence" value="ECO:0007669"/>
    <property type="project" value="TreeGrafter"/>
</dbReference>
<dbReference type="GO" id="GO:0003677">
    <property type="term" value="F:DNA binding"/>
    <property type="evidence" value="ECO:0007669"/>
    <property type="project" value="UniProtKB-UniRule"/>
</dbReference>
<dbReference type="GO" id="GO:0030527">
    <property type="term" value="F:structural constituent of chromatin"/>
    <property type="evidence" value="ECO:0007669"/>
    <property type="project" value="InterPro"/>
</dbReference>
<dbReference type="GO" id="GO:0006310">
    <property type="term" value="P:DNA recombination"/>
    <property type="evidence" value="ECO:0007669"/>
    <property type="project" value="UniProtKB-UniRule"/>
</dbReference>
<dbReference type="GO" id="GO:0006355">
    <property type="term" value="P:regulation of DNA-templated transcription"/>
    <property type="evidence" value="ECO:0007669"/>
    <property type="project" value="UniProtKB-UniRule"/>
</dbReference>
<dbReference type="GO" id="GO:0006417">
    <property type="term" value="P:regulation of translation"/>
    <property type="evidence" value="ECO:0007669"/>
    <property type="project" value="UniProtKB-UniRule"/>
</dbReference>
<dbReference type="CDD" id="cd13836">
    <property type="entry name" value="IHF_B"/>
    <property type="match status" value="1"/>
</dbReference>
<dbReference type="FunFam" id="4.10.520.10:FF:000003">
    <property type="entry name" value="Integration host factor subunit beta"/>
    <property type="match status" value="1"/>
</dbReference>
<dbReference type="Gene3D" id="4.10.520.10">
    <property type="entry name" value="IHF-like DNA-binding proteins"/>
    <property type="match status" value="1"/>
</dbReference>
<dbReference type="HAMAP" id="MF_00381">
    <property type="entry name" value="IHF_beta"/>
    <property type="match status" value="1"/>
</dbReference>
<dbReference type="InterPro" id="IPR000119">
    <property type="entry name" value="Hist_DNA-bd"/>
</dbReference>
<dbReference type="InterPro" id="IPR020816">
    <property type="entry name" value="Histone-like_DNA-bd_CS"/>
</dbReference>
<dbReference type="InterPro" id="IPR010992">
    <property type="entry name" value="IHF-like_DNA-bd_dom_sf"/>
</dbReference>
<dbReference type="InterPro" id="IPR005685">
    <property type="entry name" value="IHF_beta"/>
</dbReference>
<dbReference type="NCBIfam" id="TIGR00988">
    <property type="entry name" value="hip"/>
    <property type="match status" value="1"/>
</dbReference>
<dbReference type="NCBIfam" id="NF001222">
    <property type="entry name" value="PRK00199.1"/>
    <property type="match status" value="1"/>
</dbReference>
<dbReference type="PANTHER" id="PTHR33175">
    <property type="entry name" value="DNA-BINDING PROTEIN HU"/>
    <property type="match status" value="1"/>
</dbReference>
<dbReference type="PANTHER" id="PTHR33175:SF5">
    <property type="entry name" value="INTEGRATION HOST FACTOR SUBUNIT BETA"/>
    <property type="match status" value="1"/>
</dbReference>
<dbReference type="Pfam" id="PF00216">
    <property type="entry name" value="Bac_DNA_binding"/>
    <property type="match status" value="1"/>
</dbReference>
<dbReference type="PRINTS" id="PR01727">
    <property type="entry name" value="DNABINDINGHU"/>
</dbReference>
<dbReference type="SMART" id="SM00411">
    <property type="entry name" value="BHL"/>
    <property type="match status" value="1"/>
</dbReference>
<dbReference type="SUPFAM" id="SSF47729">
    <property type="entry name" value="IHF-like DNA-binding proteins"/>
    <property type="match status" value="1"/>
</dbReference>
<dbReference type="PROSITE" id="PS00045">
    <property type="entry name" value="HISTONE_LIKE"/>
    <property type="match status" value="1"/>
</dbReference>
<evidence type="ECO:0000255" key="1">
    <source>
        <dbReference type="HAMAP-Rule" id="MF_00381"/>
    </source>
</evidence>
<reference key="1">
    <citation type="submission" date="2007-11" db="EMBL/GenBank/DDBJ databases">
        <authorList>
            <consortium name="The Salmonella enterica serovar Paratyphi B Genome Sequencing Project"/>
            <person name="McClelland M."/>
            <person name="Sanderson E.K."/>
            <person name="Porwollik S."/>
            <person name="Spieth J."/>
            <person name="Clifton W.S."/>
            <person name="Fulton R."/>
            <person name="Cordes M."/>
            <person name="Wollam A."/>
            <person name="Shah N."/>
            <person name="Pepin K."/>
            <person name="Bhonagiri V."/>
            <person name="Nash W."/>
            <person name="Johnson M."/>
            <person name="Thiruvilangam P."/>
            <person name="Wilson R."/>
        </authorList>
    </citation>
    <scope>NUCLEOTIDE SEQUENCE [LARGE SCALE GENOMIC DNA]</scope>
    <source>
        <strain>ATCC BAA-1250 / SPB7</strain>
    </source>
</reference>
<name>IHFB_SALPB</name>
<comment type="function">
    <text evidence="1">This protein is one of the two subunits of integration host factor, a specific DNA-binding protein that functions in genetic recombination as well as in transcriptional and translational control.</text>
</comment>
<comment type="subunit">
    <text evidence="1">Heterodimer of an alpha and a beta chain.</text>
</comment>
<comment type="similarity">
    <text evidence="1">Belongs to the bacterial histone-like protein family.</text>
</comment>
<protein>
    <recommendedName>
        <fullName evidence="1">Integration host factor subunit beta</fullName>
        <shortName evidence="1">IHF-beta</shortName>
    </recommendedName>
</protein>
<organism>
    <name type="scientific">Salmonella paratyphi B (strain ATCC BAA-1250 / SPB7)</name>
    <dbReference type="NCBI Taxonomy" id="1016998"/>
    <lineage>
        <taxon>Bacteria</taxon>
        <taxon>Pseudomonadati</taxon>
        <taxon>Pseudomonadota</taxon>
        <taxon>Gammaproteobacteria</taxon>
        <taxon>Enterobacterales</taxon>
        <taxon>Enterobacteriaceae</taxon>
        <taxon>Salmonella</taxon>
    </lineage>
</organism>
<accession>A9N7V2</accession>
<feature type="chain" id="PRO_1000080050" description="Integration host factor subunit beta">
    <location>
        <begin position="1"/>
        <end position="94"/>
    </location>
</feature>